<dbReference type="EC" id="2.7.11.33" evidence="1"/>
<dbReference type="EC" id="2.7.4.28" evidence="1"/>
<dbReference type="EMBL" id="CP000961">
    <property type="protein sequence ID" value="ACA86992.1"/>
    <property type="molecule type" value="Genomic_DNA"/>
</dbReference>
<dbReference type="RefSeq" id="WP_012325329.1">
    <property type="nucleotide sequence ID" value="NC_010506.1"/>
</dbReference>
<dbReference type="SMR" id="B1KIE1"/>
<dbReference type="STRING" id="392500.Swoo_2716"/>
<dbReference type="KEGG" id="swd:Swoo_2716"/>
<dbReference type="eggNOG" id="COG1806">
    <property type="taxonomic scope" value="Bacteria"/>
</dbReference>
<dbReference type="HOGENOM" id="CLU_046206_1_0_6"/>
<dbReference type="Proteomes" id="UP000002168">
    <property type="component" value="Chromosome"/>
</dbReference>
<dbReference type="GO" id="GO:0043531">
    <property type="term" value="F:ADP binding"/>
    <property type="evidence" value="ECO:0007669"/>
    <property type="project" value="UniProtKB-UniRule"/>
</dbReference>
<dbReference type="GO" id="GO:0005524">
    <property type="term" value="F:ATP binding"/>
    <property type="evidence" value="ECO:0007669"/>
    <property type="project" value="InterPro"/>
</dbReference>
<dbReference type="GO" id="GO:0016776">
    <property type="term" value="F:phosphotransferase activity, phosphate group as acceptor"/>
    <property type="evidence" value="ECO:0007669"/>
    <property type="project" value="UniProtKB-UniRule"/>
</dbReference>
<dbReference type="GO" id="GO:0004674">
    <property type="term" value="F:protein serine/threonine kinase activity"/>
    <property type="evidence" value="ECO:0007669"/>
    <property type="project" value="UniProtKB-UniRule"/>
</dbReference>
<dbReference type="HAMAP" id="MF_01062">
    <property type="entry name" value="PSRP"/>
    <property type="match status" value="1"/>
</dbReference>
<dbReference type="InterPro" id="IPR005177">
    <property type="entry name" value="Kinase-pyrophosphorylase"/>
</dbReference>
<dbReference type="InterPro" id="IPR026530">
    <property type="entry name" value="PSRP"/>
</dbReference>
<dbReference type="NCBIfam" id="NF003742">
    <property type="entry name" value="PRK05339.1"/>
    <property type="match status" value="1"/>
</dbReference>
<dbReference type="PANTHER" id="PTHR31756">
    <property type="entry name" value="PYRUVATE, PHOSPHATE DIKINASE REGULATORY PROTEIN 1, CHLOROPLASTIC"/>
    <property type="match status" value="1"/>
</dbReference>
<dbReference type="PANTHER" id="PTHR31756:SF3">
    <property type="entry name" value="PYRUVATE, PHOSPHATE DIKINASE REGULATORY PROTEIN 1, CHLOROPLASTIC"/>
    <property type="match status" value="1"/>
</dbReference>
<dbReference type="Pfam" id="PF03618">
    <property type="entry name" value="Kinase-PPPase"/>
    <property type="match status" value="1"/>
</dbReference>
<organism>
    <name type="scientific">Shewanella woodyi (strain ATCC 51908 / MS32)</name>
    <dbReference type="NCBI Taxonomy" id="392500"/>
    <lineage>
        <taxon>Bacteria</taxon>
        <taxon>Pseudomonadati</taxon>
        <taxon>Pseudomonadota</taxon>
        <taxon>Gammaproteobacteria</taxon>
        <taxon>Alteromonadales</taxon>
        <taxon>Shewanellaceae</taxon>
        <taxon>Shewanella</taxon>
    </lineage>
</organism>
<keyword id="KW-0418">Kinase</keyword>
<keyword id="KW-0547">Nucleotide-binding</keyword>
<keyword id="KW-1185">Reference proteome</keyword>
<keyword id="KW-0723">Serine/threonine-protein kinase</keyword>
<keyword id="KW-0808">Transferase</keyword>
<protein>
    <recommendedName>
        <fullName evidence="1">Putative phosphoenolpyruvate synthase regulatory protein</fullName>
        <shortName evidence="1">PEP synthase regulatory protein</shortName>
        <shortName evidence="1">PSRP</shortName>
        <ecNumber evidence="1">2.7.11.33</ecNumber>
        <ecNumber evidence="1">2.7.4.28</ecNumber>
    </recommendedName>
    <alternativeName>
        <fullName evidence="1">Pyruvate, water dikinase regulatory protein</fullName>
    </alternativeName>
</protein>
<accession>B1KIE1</accession>
<evidence type="ECO:0000255" key="1">
    <source>
        <dbReference type="HAMAP-Rule" id="MF_01062"/>
    </source>
</evidence>
<reference key="1">
    <citation type="submission" date="2008-02" db="EMBL/GenBank/DDBJ databases">
        <title>Complete sequence of Shewanella woodyi ATCC 51908.</title>
        <authorList>
            <consortium name="US DOE Joint Genome Institute"/>
            <person name="Copeland A."/>
            <person name="Lucas S."/>
            <person name="Lapidus A."/>
            <person name="Glavina del Rio T."/>
            <person name="Dalin E."/>
            <person name="Tice H."/>
            <person name="Bruce D."/>
            <person name="Goodwin L."/>
            <person name="Pitluck S."/>
            <person name="Sims D."/>
            <person name="Brettin T."/>
            <person name="Detter J.C."/>
            <person name="Han C."/>
            <person name="Kuske C.R."/>
            <person name="Schmutz J."/>
            <person name="Larimer F."/>
            <person name="Land M."/>
            <person name="Hauser L."/>
            <person name="Kyrpides N."/>
            <person name="Lykidis A."/>
            <person name="Zhao J.-S."/>
            <person name="Richardson P."/>
        </authorList>
    </citation>
    <scope>NUCLEOTIDE SEQUENCE [LARGE SCALE GENOMIC DNA]</scope>
    <source>
        <strain>ATCC 51908 / MS32</strain>
    </source>
</reference>
<feature type="chain" id="PRO_1000136497" description="Putative phosphoenolpyruvate synthase regulatory protein">
    <location>
        <begin position="1"/>
        <end position="270"/>
    </location>
</feature>
<feature type="binding site" evidence="1">
    <location>
        <begin position="150"/>
        <end position="157"/>
    </location>
    <ligand>
        <name>ADP</name>
        <dbReference type="ChEBI" id="CHEBI:456216"/>
    </ligand>
</feature>
<proteinExistence type="inferred from homology"/>
<sequence>MLRKVFYISDGTAITAEVFGHAVLSQFPVEFEALTIPFVETESKANEVKAQINDCFITTGERPLVFHSIVKAEIRDIIYSSEGLDYDFLNTFVAPLEQQLGISATPVVHRTHGNMNESYEARIDAINYAMDNDDGQTLKHIDKADLVLLGVSRCGKTPSSLYLSMQFGIKAANYPFVEDDMDNLKLPDALKKNKSKLFGLTIDPVRLHEIRQSRMENSRYSSLRQCRIEVKEVEMMYKRERIPFVNTTNHSVEEIATKILAMTGLERHMF</sequence>
<comment type="function">
    <text evidence="1">Bifunctional serine/threonine kinase and phosphorylase involved in the regulation of the phosphoenolpyruvate synthase (PEPS) by catalyzing its phosphorylation/dephosphorylation.</text>
</comment>
<comment type="catalytic activity">
    <reaction evidence="1">
        <text>[pyruvate, water dikinase] + ADP = [pyruvate, water dikinase]-phosphate + AMP + H(+)</text>
        <dbReference type="Rhea" id="RHEA:46020"/>
        <dbReference type="Rhea" id="RHEA-COMP:11425"/>
        <dbReference type="Rhea" id="RHEA-COMP:11426"/>
        <dbReference type="ChEBI" id="CHEBI:15378"/>
        <dbReference type="ChEBI" id="CHEBI:43176"/>
        <dbReference type="ChEBI" id="CHEBI:68546"/>
        <dbReference type="ChEBI" id="CHEBI:456215"/>
        <dbReference type="ChEBI" id="CHEBI:456216"/>
        <dbReference type="EC" id="2.7.11.33"/>
    </reaction>
</comment>
<comment type="catalytic activity">
    <reaction evidence="1">
        <text>[pyruvate, water dikinase]-phosphate + phosphate + H(+) = [pyruvate, water dikinase] + diphosphate</text>
        <dbReference type="Rhea" id="RHEA:48580"/>
        <dbReference type="Rhea" id="RHEA-COMP:11425"/>
        <dbReference type="Rhea" id="RHEA-COMP:11426"/>
        <dbReference type="ChEBI" id="CHEBI:15378"/>
        <dbReference type="ChEBI" id="CHEBI:33019"/>
        <dbReference type="ChEBI" id="CHEBI:43176"/>
        <dbReference type="ChEBI" id="CHEBI:43474"/>
        <dbReference type="ChEBI" id="CHEBI:68546"/>
        <dbReference type="EC" id="2.7.4.28"/>
    </reaction>
</comment>
<comment type="similarity">
    <text evidence="1">Belongs to the pyruvate, phosphate/water dikinase regulatory protein family. PSRP subfamily.</text>
</comment>
<gene>
    <name type="ordered locus">Swoo_2716</name>
</gene>
<name>PSRP_SHEWM</name>